<reference key="1">
    <citation type="journal article" date="2006" name="J. Bacteriol.">
        <title>Complete genome sequence of Yersinia pestis strains Antiqua and Nepal516: evidence of gene reduction in an emerging pathogen.</title>
        <authorList>
            <person name="Chain P.S.G."/>
            <person name="Hu P."/>
            <person name="Malfatti S.A."/>
            <person name="Radnedge L."/>
            <person name="Larimer F."/>
            <person name="Vergez L.M."/>
            <person name="Worsham P."/>
            <person name="Chu M.C."/>
            <person name="Andersen G.L."/>
        </authorList>
    </citation>
    <scope>NUCLEOTIDE SEQUENCE [LARGE SCALE GENOMIC DNA]</scope>
    <source>
        <strain>Nepal516</strain>
    </source>
</reference>
<reference key="2">
    <citation type="submission" date="2009-04" db="EMBL/GenBank/DDBJ databases">
        <title>Yersinia pestis Nepal516A whole genome shotgun sequencing project.</title>
        <authorList>
            <person name="Plunkett G. III"/>
            <person name="Anderson B.D."/>
            <person name="Baumler D.J."/>
            <person name="Burland V."/>
            <person name="Cabot E.L."/>
            <person name="Glasner J.D."/>
            <person name="Mau B."/>
            <person name="Neeno-Eckwall E."/>
            <person name="Perna N.T."/>
            <person name="Munk A.C."/>
            <person name="Tapia R."/>
            <person name="Green L.D."/>
            <person name="Rogers Y.C."/>
            <person name="Detter J.C."/>
            <person name="Bruce D.C."/>
            <person name="Brettin T.S."/>
        </authorList>
    </citation>
    <scope>NUCLEOTIDE SEQUENCE [LARGE SCALE GENOMIC DNA]</scope>
    <source>
        <strain>Nepal516</strain>
    </source>
</reference>
<name>SECA_YERPN</name>
<organism>
    <name type="scientific">Yersinia pestis bv. Antiqua (strain Nepal516)</name>
    <dbReference type="NCBI Taxonomy" id="377628"/>
    <lineage>
        <taxon>Bacteria</taxon>
        <taxon>Pseudomonadati</taxon>
        <taxon>Pseudomonadota</taxon>
        <taxon>Gammaproteobacteria</taxon>
        <taxon>Enterobacterales</taxon>
        <taxon>Yersiniaceae</taxon>
        <taxon>Yersinia</taxon>
    </lineage>
</organism>
<proteinExistence type="inferred from homology"/>
<evidence type="ECO:0000255" key="1">
    <source>
        <dbReference type="HAMAP-Rule" id="MF_01382"/>
    </source>
</evidence>
<evidence type="ECO:0000256" key="2">
    <source>
        <dbReference type="SAM" id="MobiDB-lite"/>
    </source>
</evidence>
<accession>Q1CML8</accession>
<accession>C4GNY6</accession>
<keyword id="KW-0067">ATP-binding</keyword>
<keyword id="KW-0997">Cell inner membrane</keyword>
<keyword id="KW-1003">Cell membrane</keyword>
<keyword id="KW-0963">Cytoplasm</keyword>
<keyword id="KW-0472">Membrane</keyword>
<keyword id="KW-0479">Metal-binding</keyword>
<keyword id="KW-0547">Nucleotide-binding</keyword>
<keyword id="KW-0653">Protein transport</keyword>
<keyword id="KW-1278">Translocase</keyword>
<keyword id="KW-0811">Translocation</keyword>
<keyword id="KW-0813">Transport</keyword>
<keyword id="KW-0862">Zinc</keyword>
<protein>
    <recommendedName>
        <fullName evidence="1">Protein translocase subunit SecA</fullName>
        <ecNumber evidence="1">7.4.2.8</ecNumber>
    </recommendedName>
</protein>
<gene>
    <name evidence="1" type="primary">secA</name>
    <name type="ordered locus">YPN_0430</name>
    <name type="ORF">YP516_0444</name>
</gene>
<comment type="function">
    <text evidence="1">Part of the Sec protein translocase complex. Interacts with the SecYEG preprotein conducting channel. Has a central role in coupling the hydrolysis of ATP to the transfer of proteins into and across the cell membrane, serving both as a receptor for the preprotein-SecB complex and as an ATP-driven molecular motor driving the stepwise translocation of polypeptide chains across the membrane.</text>
</comment>
<comment type="catalytic activity">
    <reaction evidence="1">
        <text>ATP + H2O + cellular proteinSide 1 = ADP + phosphate + cellular proteinSide 2.</text>
        <dbReference type="EC" id="7.4.2.8"/>
    </reaction>
</comment>
<comment type="cofactor">
    <cofactor evidence="1">
        <name>Zn(2+)</name>
        <dbReference type="ChEBI" id="CHEBI:29105"/>
    </cofactor>
    <text evidence="1">May bind 1 zinc ion per subunit.</text>
</comment>
<comment type="subunit">
    <text evidence="1">Monomer and homodimer. Part of the essential Sec protein translocation apparatus which comprises SecA, SecYEG and auxiliary proteins SecDF-YajC and YidC.</text>
</comment>
<comment type="subcellular location">
    <subcellularLocation>
        <location evidence="1">Cell inner membrane</location>
        <topology evidence="1">Peripheral membrane protein</topology>
        <orientation evidence="1">Cytoplasmic side</orientation>
    </subcellularLocation>
    <subcellularLocation>
        <location evidence="1">Cytoplasm</location>
    </subcellularLocation>
    <text evidence="1">Distribution is 50-50.</text>
</comment>
<comment type="induction">
    <text evidence="1">Repressed under conditions of excess protein secretion capacity and derepressed when protein secretion becomes limiting. This is regulated by SecM.</text>
</comment>
<comment type="similarity">
    <text evidence="1">Belongs to the SecA family.</text>
</comment>
<dbReference type="EC" id="7.4.2.8" evidence="1"/>
<dbReference type="EMBL" id="CP000305">
    <property type="protein sequence ID" value="ABG16762.1"/>
    <property type="molecule type" value="Genomic_DNA"/>
</dbReference>
<dbReference type="EMBL" id="ACNQ01000006">
    <property type="protein sequence ID" value="EEO78218.1"/>
    <property type="molecule type" value="Genomic_DNA"/>
</dbReference>
<dbReference type="RefSeq" id="WP_002210426.1">
    <property type="nucleotide sequence ID" value="NZ_ACNQ01000006.1"/>
</dbReference>
<dbReference type="SMR" id="Q1CML8"/>
<dbReference type="GeneID" id="57974051"/>
<dbReference type="KEGG" id="ypn:YPN_0430"/>
<dbReference type="HOGENOM" id="CLU_005314_3_0_6"/>
<dbReference type="Proteomes" id="UP000008936">
    <property type="component" value="Chromosome"/>
</dbReference>
<dbReference type="GO" id="GO:0031522">
    <property type="term" value="C:cell envelope Sec protein transport complex"/>
    <property type="evidence" value="ECO:0007669"/>
    <property type="project" value="TreeGrafter"/>
</dbReference>
<dbReference type="GO" id="GO:0005829">
    <property type="term" value="C:cytosol"/>
    <property type="evidence" value="ECO:0007669"/>
    <property type="project" value="TreeGrafter"/>
</dbReference>
<dbReference type="GO" id="GO:0005886">
    <property type="term" value="C:plasma membrane"/>
    <property type="evidence" value="ECO:0007669"/>
    <property type="project" value="UniProtKB-SubCell"/>
</dbReference>
<dbReference type="GO" id="GO:0005524">
    <property type="term" value="F:ATP binding"/>
    <property type="evidence" value="ECO:0007669"/>
    <property type="project" value="UniProtKB-UniRule"/>
</dbReference>
<dbReference type="GO" id="GO:0046872">
    <property type="term" value="F:metal ion binding"/>
    <property type="evidence" value="ECO:0007669"/>
    <property type="project" value="UniProtKB-KW"/>
</dbReference>
<dbReference type="GO" id="GO:0008564">
    <property type="term" value="F:protein-exporting ATPase activity"/>
    <property type="evidence" value="ECO:0007669"/>
    <property type="project" value="UniProtKB-EC"/>
</dbReference>
<dbReference type="GO" id="GO:0065002">
    <property type="term" value="P:intracellular protein transmembrane transport"/>
    <property type="evidence" value="ECO:0007669"/>
    <property type="project" value="UniProtKB-UniRule"/>
</dbReference>
<dbReference type="GO" id="GO:0017038">
    <property type="term" value="P:protein import"/>
    <property type="evidence" value="ECO:0007669"/>
    <property type="project" value="InterPro"/>
</dbReference>
<dbReference type="GO" id="GO:0006605">
    <property type="term" value="P:protein targeting"/>
    <property type="evidence" value="ECO:0007669"/>
    <property type="project" value="UniProtKB-UniRule"/>
</dbReference>
<dbReference type="GO" id="GO:0043952">
    <property type="term" value="P:protein transport by the Sec complex"/>
    <property type="evidence" value="ECO:0007669"/>
    <property type="project" value="TreeGrafter"/>
</dbReference>
<dbReference type="CDD" id="cd17928">
    <property type="entry name" value="DEXDc_SecA"/>
    <property type="match status" value="1"/>
</dbReference>
<dbReference type="CDD" id="cd18803">
    <property type="entry name" value="SF2_C_secA"/>
    <property type="match status" value="1"/>
</dbReference>
<dbReference type="FunFam" id="1.10.3060.10:FF:000001">
    <property type="entry name" value="Preprotein translocase subunit SecA"/>
    <property type="match status" value="1"/>
</dbReference>
<dbReference type="FunFam" id="3.40.50.300:FF:000081">
    <property type="entry name" value="Preprotein translocase subunit SecA"/>
    <property type="match status" value="1"/>
</dbReference>
<dbReference type="FunFam" id="3.40.50.300:FF:000113">
    <property type="entry name" value="Preprotein translocase subunit SecA"/>
    <property type="match status" value="1"/>
</dbReference>
<dbReference type="FunFam" id="3.90.1440.10:FF:000001">
    <property type="entry name" value="Preprotein translocase subunit SecA"/>
    <property type="match status" value="1"/>
</dbReference>
<dbReference type="Gene3D" id="1.10.3060.10">
    <property type="entry name" value="Helical scaffold and wing domains of SecA"/>
    <property type="match status" value="1"/>
</dbReference>
<dbReference type="Gene3D" id="3.40.50.300">
    <property type="entry name" value="P-loop containing nucleotide triphosphate hydrolases"/>
    <property type="match status" value="2"/>
</dbReference>
<dbReference type="Gene3D" id="3.90.1440.10">
    <property type="entry name" value="SecA, preprotein cross-linking domain"/>
    <property type="match status" value="1"/>
</dbReference>
<dbReference type="HAMAP" id="MF_01382">
    <property type="entry name" value="SecA"/>
    <property type="match status" value="1"/>
</dbReference>
<dbReference type="InterPro" id="IPR014001">
    <property type="entry name" value="Helicase_ATP-bd"/>
</dbReference>
<dbReference type="InterPro" id="IPR027417">
    <property type="entry name" value="P-loop_NTPase"/>
</dbReference>
<dbReference type="InterPro" id="IPR004027">
    <property type="entry name" value="SEC_C_motif"/>
</dbReference>
<dbReference type="InterPro" id="IPR000185">
    <property type="entry name" value="SecA"/>
</dbReference>
<dbReference type="InterPro" id="IPR020937">
    <property type="entry name" value="SecA_CS"/>
</dbReference>
<dbReference type="InterPro" id="IPR011115">
    <property type="entry name" value="SecA_DEAD"/>
</dbReference>
<dbReference type="InterPro" id="IPR014018">
    <property type="entry name" value="SecA_motor_DEAD"/>
</dbReference>
<dbReference type="InterPro" id="IPR011130">
    <property type="entry name" value="SecA_preprotein_X-link_dom"/>
</dbReference>
<dbReference type="InterPro" id="IPR044722">
    <property type="entry name" value="SecA_SF2_C"/>
</dbReference>
<dbReference type="InterPro" id="IPR011116">
    <property type="entry name" value="SecA_Wing/Scaffold"/>
</dbReference>
<dbReference type="InterPro" id="IPR036266">
    <property type="entry name" value="SecA_Wing/Scaffold_sf"/>
</dbReference>
<dbReference type="InterPro" id="IPR036670">
    <property type="entry name" value="SecA_X-link_sf"/>
</dbReference>
<dbReference type="NCBIfam" id="NF009538">
    <property type="entry name" value="PRK12904.1"/>
    <property type="match status" value="1"/>
</dbReference>
<dbReference type="NCBIfam" id="TIGR00963">
    <property type="entry name" value="secA"/>
    <property type="match status" value="1"/>
</dbReference>
<dbReference type="PANTHER" id="PTHR30612:SF0">
    <property type="entry name" value="CHLOROPLAST PROTEIN-TRANSPORTING ATPASE"/>
    <property type="match status" value="1"/>
</dbReference>
<dbReference type="PANTHER" id="PTHR30612">
    <property type="entry name" value="SECA INNER MEMBRANE COMPONENT OF SEC PROTEIN SECRETION SYSTEM"/>
    <property type="match status" value="1"/>
</dbReference>
<dbReference type="Pfam" id="PF21090">
    <property type="entry name" value="P-loop_SecA"/>
    <property type="match status" value="1"/>
</dbReference>
<dbReference type="Pfam" id="PF02810">
    <property type="entry name" value="SEC-C"/>
    <property type="match status" value="1"/>
</dbReference>
<dbReference type="Pfam" id="PF07517">
    <property type="entry name" value="SecA_DEAD"/>
    <property type="match status" value="1"/>
</dbReference>
<dbReference type="Pfam" id="PF01043">
    <property type="entry name" value="SecA_PP_bind"/>
    <property type="match status" value="1"/>
</dbReference>
<dbReference type="Pfam" id="PF07516">
    <property type="entry name" value="SecA_SW"/>
    <property type="match status" value="1"/>
</dbReference>
<dbReference type="PRINTS" id="PR00906">
    <property type="entry name" value="SECA"/>
</dbReference>
<dbReference type="SMART" id="SM00957">
    <property type="entry name" value="SecA_DEAD"/>
    <property type="match status" value="1"/>
</dbReference>
<dbReference type="SMART" id="SM00958">
    <property type="entry name" value="SecA_PP_bind"/>
    <property type="match status" value="1"/>
</dbReference>
<dbReference type="SUPFAM" id="SSF81886">
    <property type="entry name" value="Helical scaffold and wing domains of SecA"/>
    <property type="match status" value="1"/>
</dbReference>
<dbReference type="SUPFAM" id="SSF52540">
    <property type="entry name" value="P-loop containing nucleoside triphosphate hydrolases"/>
    <property type="match status" value="2"/>
</dbReference>
<dbReference type="SUPFAM" id="SSF81767">
    <property type="entry name" value="Pre-protein crosslinking domain of SecA"/>
    <property type="match status" value="1"/>
</dbReference>
<dbReference type="PROSITE" id="PS01312">
    <property type="entry name" value="SECA"/>
    <property type="match status" value="1"/>
</dbReference>
<dbReference type="PROSITE" id="PS51196">
    <property type="entry name" value="SECA_MOTOR_DEAD"/>
    <property type="match status" value="1"/>
</dbReference>
<sequence>MLIKLLTKVFGSRNDRTLRRMQKVVDVINRMEPDIEKLTDTELRAKTDEFRERLAKGEVLENLIPEAFAVVREASKRVFGMRHFDVQLLGGMVLNERCIAEMRTGEGKTLTATLPAYLNALSGRGVHVVTVNDYLAQRDAENNRPLFEFLGLSIGINLPNMTAPAKRAAYAADITYGTNNEFGFDYLRDNMAFSPEERVQRQLHYALVDEVDSILIDEARTPLIISGPAEDSSEMYIRVNKLIPKLIRQEKEDSDSFQGEGHFSVDEKSRQVHLTERGLILIEQMLVEAGIMDEGESLYSPANIMLMHHVTAALRAHVLFTRDVDYIVKDGEVIIVDEHTGRTMQGRRWSDGLHQAVEAKEGVEIQNENQTLASITFQNYFRLYEKLAGMTGTADTEAFEFSSIYKLDTIVVPTNRPMIRKDLADLVYMTEQEKIGAIIEDIRERTANGQPVLVGTISIEKSEVVSAELTKAGIEHKVLNAKFHAMEAEIVSQAGQPGAVTIATNMAGRGTDIVLGGSWQSEIAALEDPTEEQIAAIKAAWQIRHDAVLASGGLHIIGTERHESRRIDNQLRGRAGRQGDAGSSRFYLSMEDALMRIFASDRVSGMMRKLGMKPGEAIEHPWVTKAIANAQRKVESRNFDIRKQLLEYDDVANDQRRAIYSQRNELLDVSDVSETINSIREDVFKTTIDSYIPTQSLEEMWDIEGLEQRLKNDFDLDMPIAKWLEDEPQLHEETLRERILQQAIETYQRKEEVVGIEMMRNFEKGVMLQTLDSLWKEHLAAMDYLRQGIHLRGYAQKDPKQEYKRESFAMFAAMLESLKYEVISVLSKVQVRMPEEVEALEVQRREEAERLARQQQLSHQTDNSALMSEEEVKVANSLERKVGRNDPCPCGSGKKYKQCHGRLQ</sequence>
<feature type="chain" id="PRO_0000321053" description="Protein translocase subunit SecA">
    <location>
        <begin position="1"/>
        <end position="904"/>
    </location>
</feature>
<feature type="region of interest" description="Disordered" evidence="2">
    <location>
        <begin position="851"/>
        <end position="870"/>
    </location>
</feature>
<feature type="binding site" evidence="1">
    <location>
        <position position="87"/>
    </location>
    <ligand>
        <name>ATP</name>
        <dbReference type="ChEBI" id="CHEBI:30616"/>
    </ligand>
</feature>
<feature type="binding site" evidence="1">
    <location>
        <begin position="105"/>
        <end position="109"/>
    </location>
    <ligand>
        <name>ATP</name>
        <dbReference type="ChEBI" id="CHEBI:30616"/>
    </ligand>
</feature>
<feature type="binding site" evidence="1">
    <location>
        <position position="512"/>
    </location>
    <ligand>
        <name>ATP</name>
        <dbReference type="ChEBI" id="CHEBI:30616"/>
    </ligand>
</feature>
<feature type="binding site" evidence="1">
    <location>
        <position position="888"/>
    </location>
    <ligand>
        <name>Zn(2+)</name>
        <dbReference type="ChEBI" id="CHEBI:29105"/>
    </ligand>
</feature>
<feature type="binding site" evidence="1">
    <location>
        <position position="890"/>
    </location>
    <ligand>
        <name>Zn(2+)</name>
        <dbReference type="ChEBI" id="CHEBI:29105"/>
    </ligand>
</feature>
<feature type="binding site" evidence="1">
    <location>
        <position position="899"/>
    </location>
    <ligand>
        <name>Zn(2+)</name>
        <dbReference type="ChEBI" id="CHEBI:29105"/>
    </ligand>
</feature>
<feature type="binding site" evidence="1">
    <location>
        <position position="900"/>
    </location>
    <ligand>
        <name>Zn(2+)</name>
        <dbReference type="ChEBI" id="CHEBI:29105"/>
    </ligand>
</feature>